<gene>
    <name type="primary">ACS2</name>
    <name type="synonym">PCVV4A</name>
</gene>
<feature type="chain" id="PRO_0000123908" description="1-aminocyclopropane-1-carboxylate synthase CMA101">
    <location>
        <begin position="1"/>
        <end position="475"/>
    </location>
</feature>
<feature type="modified residue" description="N6-(pyridoxal phosphate)lysine" evidence="1">
    <location>
        <position position="272"/>
    </location>
</feature>
<keyword id="KW-0266">Ethylene biosynthesis</keyword>
<keyword id="KW-0292">Fruit ripening</keyword>
<keyword id="KW-0456">Lyase</keyword>
<keyword id="KW-0663">Pyridoxal phosphate</keyword>
<keyword id="KW-1185">Reference proteome</keyword>
<keyword id="KW-0949">S-adenosyl-L-methionine</keyword>
<sequence>MKMLSTKATCNSHGQDSSYFLGWEAYENNPFHHTSNPNGIIQMGLAENQLSFDLLESWLSKNPDAASFKRDGKSIFRELALFQDYHGLPAFKKALVEFMAEIRGNKVSFEANNIVLTAGATSANETLMFCLAEAGDAFLLPTPYYPGFDRDLKWRTGVEIVPIHCTSSNGFQITQSALEQAYKDAQTRNLRVKGVLVTNPSNPLGTTMNRDELNLVFDFITSKGIHLISDEIYSGTVFGSPGFVSAMEVLKERSSEDEEVWKRVHIVYSLSKDLGLPGFRVGAIYSNDDMVVAAATKMSSFGLVSSQTQYLLSAMLSDKKFTISYISENQKRLKQRQKMLVSGLQKAGINCLDSNAGLFCWVDMRHLLESDKFESELELWKKIVYEVGLNISPGSSCHCTEPGWFRVCFANMSESTLKLAVRRLKSFVTELRSTTTSNHRNHDNKICKNIKKNIFTKWVFRQSAQEANRKMQAER</sequence>
<proteinExistence type="evidence at transcript level"/>
<protein>
    <recommendedName>
        <fullName>1-aminocyclopropane-1-carboxylate synthase CMA101</fullName>
        <shortName>ACC synthase</shortName>
        <ecNumber>4.4.1.14</ecNumber>
    </recommendedName>
    <alternativeName>
        <fullName>S-adenosyl-L-methionine methylthioadenosine-lyase</fullName>
    </alternativeName>
</protein>
<name>1A12_CUCMA</name>
<organism>
    <name type="scientific">Cucurbita maxima</name>
    <name type="common">Pumpkin</name>
    <name type="synonym">Winter squash</name>
    <dbReference type="NCBI Taxonomy" id="3661"/>
    <lineage>
        <taxon>Eukaryota</taxon>
        <taxon>Viridiplantae</taxon>
        <taxon>Streptophyta</taxon>
        <taxon>Embryophyta</taxon>
        <taxon>Tracheophyta</taxon>
        <taxon>Spermatophyta</taxon>
        <taxon>Magnoliopsida</taxon>
        <taxon>eudicotyledons</taxon>
        <taxon>Gunneridae</taxon>
        <taxon>Pentapetalae</taxon>
        <taxon>rosids</taxon>
        <taxon>fabids</taxon>
        <taxon>Cucurbitales</taxon>
        <taxon>Cucurbitaceae</taxon>
        <taxon>Cucurbiteae</taxon>
        <taxon>Cucurbita</taxon>
    </lineage>
</organism>
<reference key="1">
    <citation type="journal article" date="1991" name="Plant Cell Physiol.">
        <title>Cloning of a complementary DNA for auxin-induced 1-aminocyclopropane-1-carboxylate synthase and differential expression of the gene by auxin and wounding.</title>
        <authorList>
            <person name="Nakagawa N."/>
            <person name="Mori H."/>
            <person name="Yamazaki K."/>
            <person name="Imaseki H."/>
        </authorList>
    </citation>
    <scope>NUCLEOTIDE SEQUENCE</scope>
</reference>
<reference key="2">
    <citation type="online journal article" date="1995" name="Plant Gene Register">
        <title>Nucleotide sequence of an auxin-regulated 1-aminocyclopropane-1-carboxylic acid synthase gene from Cucurbita maxima Duch.</title>
        <authorList>
            <person name="Nakagawa N."/>
            <person name="Kamiya Y."/>
            <person name="Imaseki H."/>
        </authorList>
        <locator>PGR95-110</locator>
    </citation>
    <scope>NUCLEOTIDE SEQUENCE</scope>
</reference>
<dbReference type="EC" id="4.4.1.14"/>
<dbReference type="EMBL" id="U37774">
    <property type="protein sequence ID" value="AAA91152.1"/>
    <property type="molecule type" value="Genomic_DNA"/>
</dbReference>
<dbReference type="EMBL" id="D01033">
    <property type="protein sequence ID" value="BAA00839.1"/>
    <property type="molecule type" value="mRNA"/>
</dbReference>
<dbReference type="PIR" id="JQ2214">
    <property type="entry name" value="JQ2214"/>
</dbReference>
<dbReference type="SMR" id="Q00257"/>
<dbReference type="OrthoDB" id="691673at2759"/>
<dbReference type="UniPathway" id="UPA00384">
    <property type="reaction ID" value="UER00562"/>
</dbReference>
<dbReference type="Proteomes" id="UP000504608">
    <property type="component" value="Unplaced"/>
</dbReference>
<dbReference type="GO" id="GO:0016847">
    <property type="term" value="F:1-aminocyclopropane-1-carboxylate synthase activity"/>
    <property type="evidence" value="ECO:0000250"/>
    <property type="project" value="UniProtKB"/>
</dbReference>
<dbReference type="GO" id="GO:0030170">
    <property type="term" value="F:pyridoxal phosphate binding"/>
    <property type="evidence" value="ECO:0007669"/>
    <property type="project" value="InterPro"/>
</dbReference>
<dbReference type="GO" id="GO:0008483">
    <property type="term" value="F:transaminase activity"/>
    <property type="evidence" value="ECO:0007669"/>
    <property type="project" value="TreeGrafter"/>
</dbReference>
<dbReference type="GO" id="GO:0009693">
    <property type="term" value="P:ethylene biosynthetic process"/>
    <property type="evidence" value="ECO:0007669"/>
    <property type="project" value="UniProtKB-UniPathway"/>
</dbReference>
<dbReference type="GO" id="GO:0009835">
    <property type="term" value="P:fruit ripening"/>
    <property type="evidence" value="ECO:0007669"/>
    <property type="project" value="UniProtKB-KW"/>
</dbReference>
<dbReference type="CDD" id="cd00609">
    <property type="entry name" value="AAT_like"/>
    <property type="match status" value="1"/>
</dbReference>
<dbReference type="FunFam" id="3.90.1150.10:FF:000038">
    <property type="entry name" value="1-aminocyclopropane-1-carboxylate synthase 2"/>
    <property type="match status" value="1"/>
</dbReference>
<dbReference type="FunFam" id="3.40.640.10:FF:000051">
    <property type="entry name" value="1-aminocyclopropane-1-carboxylate synthase 3"/>
    <property type="match status" value="1"/>
</dbReference>
<dbReference type="Gene3D" id="3.90.1150.10">
    <property type="entry name" value="Aspartate Aminotransferase, domain 1"/>
    <property type="match status" value="1"/>
</dbReference>
<dbReference type="Gene3D" id="3.40.640.10">
    <property type="entry name" value="Type I PLP-dependent aspartate aminotransferase-like (Major domain)"/>
    <property type="match status" value="1"/>
</dbReference>
<dbReference type="InterPro" id="IPR004839">
    <property type="entry name" value="Aminotransferase_I/II_large"/>
</dbReference>
<dbReference type="InterPro" id="IPR050478">
    <property type="entry name" value="Ethylene_sulfur-biosynth"/>
</dbReference>
<dbReference type="InterPro" id="IPR004838">
    <property type="entry name" value="NHTrfase_class1_PyrdxlP-BS"/>
</dbReference>
<dbReference type="InterPro" id="IPR015424">
    <property type="entry name" value="PyrdxlP-dep_Trfase"/>
</dbReference>
<dbReference type="InterPro" id="IPR015421">
    <property type="entry name" value="PyrdxlP-dep_Trfase_major"/>
</dbReference>
<dbReference type="InterPro" id="IPR015422">
    <property type="entry name" value="PyrdxlP-dep_Trfase_small"/>
</dbReference>
<dbReference type="PANTHER" id="PTHR43795:SF10">
    <property type="entry name" value="1-AMINOCYCLOPROPANE-1-CARBOXYLATE SYNTHASE 9"/>
    <property type="match status" value="1"/>
</dbReference>
<dbReference type="PANTHER" id="PTHR43795">
    <property type="entry name" value="BIFUNCTIONAL ASPARTATE AMINOTRANSFERASE AND GLUTAMATE/ASPARTATE-PREPHENATE AMINOTRANSFERASE-RELATED"/>
    <property type="match status" value="1"/>
</dbReference>
<dbReference type="Pfam" id="PF00155">
    <property type="entry name" value="Aminotran_1_2"/>
    <property type="match status" value="1"/>
</dbReference>
<dbReference type="PRINTS" id="PR00753">
    <property type="entry name" value="ACCSYNTHASE"/>
</dbReference>
<dbReference type="SUPFAM" id="SSF53383">
    <property type="entry name" value="PLP-dependent transferases"/>
    <property type="match status" value="1"/>
</dbReference>
<dbReference type="PROSITE" id="PS00105">
    <property type="entry name" value="AA_TRANSFER_CLASS_1"/>
    <property type="match status" value="1"/>
</dbReference>
<accession>Q00257</accession>
<evidence type="ECO:0000250" key="1"/>
<evidence type="ECO:0000305" key="2"/>
<comment type="function">
    <text>Catalyzes the formation of 1-aminocyclopropane-1-carboxylate, a direct precursor of ethylene in higher plants.</text>
</comment>
<comment type="catalytic activity">
    <reaction>
        <text>S-adenosyl-L-methionine = 1-aminocyclopropane-1-carboxylate + S-methyl-5'-thioadenosine + H(+)</text>
        <dbReference type="Rhea" id="RHEA:21744"/>
        <dbReference type="ChEBI" id="CHEBI:15378"/>
        <dbReference type="ChEBI" id="CHEBI:17509"/>
        <dbReference type="ChEBI" id="CHEBI:58360"/>
        <dbReference type="ChEBI" id="CHEBI:59789"/>
        <dbReference type="EC" id="4.4.1.14"/>
    </reaction>
</comment>
<comment type="cofactor">
    <cofactor>
        <name>pyridoxal 5'-phosphate</name>
        <dbReference type="ChEBI" id="CHEBI:597326"/>
    </cofactor>
</comment>
<comment type="pathway">
    <text>Alkene biosynthesis; ethylene biosynthesis via S-adenosyl-L-methionine; ethylene from S-adenosyl-L-methionine: step 1/2.</text>
</comment>
<comment type="subunit">
    <text>Homodimer.</text>
</comment>
<comment type="induction">
    <text>By tissue wounding and auxin.</text>
</comment>
<comment type="similarity">
    <text evidence="2">Belongs to the class-I pyridoxal-phosphate-dependent aminotransferase family.</text>
</comment>